<dbReference type="EMBL" id="JQ708194">
    <property type="protein sequence ID" value="AGC83584.1"/>
    <property type="molecule type" value="Genomic_DNA"/>
</dbReference>
<dbReference type="SMR" id="L7WRZ2"/>
<dbReference type="GlyCosmos" id="L7WRZ2">
    <property type="glycosylation" value="2 sites, No reported glycans"/>
</dbReference>
<dbReference type="VEuPathDB" id="FungiDB:ASPVEDRAFT_371541"/>
<dbReference type="GO" id="GO:0016020">
    <property type="term" value="C:membrane"/>
    <property type="evidence" value="ECO:0007669"/>
    <property type="project" value="UniProtKB-SubCell"/>
</dbReference>
<dbReference type="GO" id="GO:0046873">
    <property type="term" value="F:metal ion transmembrane transporter activity"/>
    <property type="evidence" value="ECO:0007669"/>
    <property type="project" value="InterPro"/>
</dbReference>
<dbReference type="Gene3D" id="1.20.58.340">
    <property type="entry name" value="Magnesium transport protein CorA, transmembrane region"/>
    <property type="match status" value="1"/>
</dbReference>
<dbReference type="InterPro" id="IPR045863">
    <property type="entry name" value="CorA_TM1_TM2"/>
</dbReference>
<dbReference type="InterPro" id="IPR002523">
    <property type="entry name" value="MgTranspt_CorA/ZnTranspt_ZntB"/>
</dbReference>
<dbReference type="Pfam" id="PF01544">
    <property type="entry name" value="CorA"/>
    <property type="match status" value="1"/>
</dbReference>
<dbReference type="SUPFAM" id="SSF144083">
    <property type="entry name" value="Magnesium transport protein CorA, transmembrane region"/>
    <property type="match status" value="1"/>
</dbReference>
<accession>L7WRZ2</accession>
<organism>
    <name type="scientific">Aspergillus versicolor</name>
    <dbReference type="NCBI Taxonomy" id="46472"/>
    <lineage>
        <taxon>Eukaryota</taxon>
        <taxon>Fungi</taxon>
        <taxon>Dikarya</taxon>
        <taxon>Ascomycota</taxon>
        <taxon>Pezizomycotina</taxon>
        <taxon>Eurotiomycetes</taxon>
        <taxon>Eurotiomycetidae</taxon>
        <taxon>Eurotiales</taxon>
        <taxon>Aspergillaceae</taxon>
        <taxon>Aspergillus</taxon>
        <taxon>Aspergillus subgen. Nidulantes</taxon>
    </lineage>
</organism>
<protein>
    <recommendedName>
        <fullName evidence="7">Notoamide biosynthesis cluster protein M'</fullName>
    </recommendedName>
</protein>
<gene>
    <name evidence="7" type="primary">notM'</name>
</gene>
<name>NOTM_ASPVE</name>
<proteinExistence type="evidence at protein level"/>
<sequence>MDYAAERAPPGVQIYMDVGDPDGWRYCGNDMNIVERDQSANFIIFVTSDINDTDKSFKLRFQEEFRPVLDADINGSFDCHYGCSQSRVWPEGSPESVSSPVMFVVSNIALVSWSCFKIKEVKTAEDYSWKQPTIHVQWNAETGSQIVHVFGFNPDQQSVFMDKLPTAAERKCNPFSLHAAFSRIILQQYDDAFWLLRDLVRHHEKARSKEKKPKRKKSKAEKEHERKIFPLLHDIARHLFHYQETIEVAEHTLQVMAKELLNWRHEDGNNIQQNIGTWLETRRRILHEEKRAHSLKTRSKSLNDRHQNEINLRQAFNLVSQDFGRDARSDSNMMTTVAFVSMVYLPGTFVSGLFGTNFFSFQADPGNTWLTADEFWMYWAVTIPLTLLTLGVWGVWHWWDTYVGWVQKMRDKKAKSTKSDEKDATADRNPEPFNLRQRIRTATRLNEIQRKETV</sequence>
<comment type="function">
    <text evidence="5 6 8">Part of the gene cluster that mediates the biosynthesis of notoamide, a fungal indole alkaloid that belongs to a family of natural products containing a characteristic bicyclo[2.2.2]diazaoctane core (PubMed:23213353). The first step of notoamide biosynthesis involves coupling of L-proline and L-tryptophan by the bimodular NRPS notE', to produce cyclo-L-tryptophan-L-proline called brevianamide F (Probable). The reverse prenyltransferase notF' then acts as a deoxybrevianamide E synthase and converts brevianamide F to deoxybrevianamide E via reverse prenylation at C-2 of the indole ring leading to the bicyclo[2.2.2]diazaoctane core (Probable) (PubMed:22660767). Deoxybrevianamide E is further hydroxylated at C-6 of the indole ring, likely catalyzed by the cytochrome P450 monooxygenase notG', to yield 6-hydroxy-deoxybrevianamide E (Probable). 6-hydroxy-deoxybrevianamide E is a specific substrate of the prenyltransferase notC' for normal prenylation at C-7 to produce 6-hydroxy-7-prenyl-deoxybrevianamide, also called notoamide S (Probable). As the proposed pivotal branching point in notoamide biosynthesis, notoamide S can be diverted to notoamide E through an oxidative pyran ring closure putatively catalyzed by either notH' cytochrome P450 monooxygenase or the notD' FAD-linked oxidoreductase (Probable). This step would be followed by an indole 2,3-epoxidation-initiated pinacol-like rearrangement catalyzed by the notB' FAD-dependent monooxygenase leading to the formation of notoamide C and notoamide D (Probable). On the other hand notoamide S is converted to notoamide T by notH' (or notD'), a bifunctional oxidase that also functions as the intramolecular Diels-Alderase responsible for generation of (-)-notoamide T (Probable). To generate antipodal (+)-notoaminide T, notH (or notD) in Aspergillus strain MF297-2 is expected to catalyze a Diels-Alder reaction leading to the opposite stereochemistry (Probable). The remaining oxidoreductase notD' (or notH') likely catalyzes the oxidative pyran ring formation to yield (-)-stephacidin A (Probable). The FAD-dependent monooxygenase notI' is highly similar to notB' and is predicted to catalyze a similar conversion from (-)-stephacidin A to (+)-notoamide B via the 2,3-epoxidation of (-)-stephacidin A followed by a pinacol-type rearrangement (Probable). Finally, it remains unclear which enzyme could be responsible for the final hydroxylation steps leading to notoamide A and sclerotiamide (Probable). The function of notM' in the notoamide biosynthesis has not been determined yet (Probable).</text>
</comment>
<comment type="subcellular location">
    <subcellularLocation>
        <location evidence="1">Membrane</location>
        <topology evidence="1">Multi-pass membrane protein</topology>
    </subcellularLocation>
</comment>
<comment type="biotechnology">
    <text evidence="4">Notoamides have been shown to exhibit antitumoral activities (PubMed:17304611). Notoamides A-C show moderate cytotoxicity against HeLa and L1210 cells with IC(50) values in the range of 22-52 mg/ml, but the IC(50) value of notoamide D is greater than 100 mg/ml (PubMed:17304611). Moreover, notoamide C induces G2/M-cell cycle arrest at a concentration of 6.3 mg/ml (PubMed:17304611).</text>
</comment>
<feature type="chain" id="PRO_0000448831" description="Notoamide biosynthesis cluster protein M'">
    <location>
        <begin position="1"/>
        <end position="454"/>
    </location>
</feature>
<feature type="transmembrane region" description="Helical" evidence="1">
    <location>
        <begin position="334"/>
        <end position="354"/>
    </location>
</feature>
<feature type="transmembrane region" description="Helical" evidence="1">
    <location>
        <begin position="375"/>
        <end position="395"/>
    </location>
</feature>
<feature type="region of interest" description="Disordered" evidence="3">
    <location>
        <begin position="205"/>
        <end position="224"/>
    </location>
</feature>
<feature type="compositionally biased region" description="Basic residues" evidence="3">
    <location>
        <begin position="205"/>
        <end position="219"/>
    </location>
</feature>
<feature type="glycosylation site" description="N-linked (GlcNAc...) asparagine" evidence="2">
    <location>
        <position position="51"/>
    </location>
</feature>
<feature type="glycosylation site" description="N-linked (GlcNAc...) asparagine" evidence="2">
    <location>
        <position position="74"/>
    </location>
</feature>
<reference key="1">
    <citation type="journal article" date="2012" name="Med. Chem. Commun.">
        <title>Comparative analysis of the biosynthetic systems for fungal bicyclo[2.2.2]diazaoctane indole alkaloids: the (+)/(-)-notoamide, paraherquamide and malbrancheamide pathways.</title>
        <authorList>
            <person name="Li S."/>
            <person name="Anand K."/>
            <person name="Tran H."/>
            <person name="Yu F."/>
            <person name="Finefield J.M."/>
            <person name="Sunderhaus J.D."/>
            <person name="McAfoos T.J."/>
            <person name="Tsukamoto S."/>
            <person name="Williams R.M."/>
            <person name="Sherman D.H."/>
        </authorList>
    </citation>
    <scope>NUCLEOTIDE SEQUENCE [GENOMIC DNA]</scope>
    <source>
        <strain>NRRL 35600</strain>
    </source>
</reference>
<reference key="2">
    <citation type="journal article" date="2007" name="Angew. Chem. Int. Ed.">
        <title>Notoamides A-D: prenylated indole alkaloids isolated from a marine-derived fungus, Aspergillus sp.</title>
        <authorList>
            <person name="Kato H."/>
            <person name="Yoshida T."/>
            <person name="Tokue T."/>
            <person name="Nojiri Y."/>
            <person name="Hirota H."/>
            <person name="Ohta T."/>
            <person name="Williams R.M."/>
            <person name="Tsukamoto S."/>
        </authorList>
    </citation>
    <scope>BIOTECHNOLOGY</scope>
</reference>
<reference key="3">
    <citation type="journal article" date="2013" name="Appl. Microbiol. Biotechnol.">
        <title>Identification of a brevianamide F reverse prenyltransferase BrePT from Aspergillus versicolor with a broad substrate specificity towards tryptophan-containing cyclic dipeptides.</title>
        <authorList>
            <person name="Yin S."/>
            <person name="Yu X."/>
            <person name="Wang Q."/>
            <person name="Liu X.Q."/>
            <person name="Li S.M."/>
        </authorList>
    </citation>
    <scope>FUNCTION</scope>
</reference>
<keyword id="KW-0325">Glycoprotein</keyword>
<keyword id="KW-0472">Membrane</keyword>
<keyword id="KW-0812">Transmembrane</keyword>
<keyword id="KW-1133">Transmembrane helix</keyword>
<evidence type="ECO:0000255" key="1"/>
<evidence type="ECO:0000255" key="2">
    <source>
        <dbReference type="PROSITE-ProRule" id="PRU00498"/>
    </source>
</evidence>
<evidence type="ECO:0000256" key="3">
    <source>
        <dbReference type="SAM" id="MobiDB-lite"/>
    </source>
</evidence>
<evidence type="ECO:0000269" key="4">
    <source>
    </source>
</evidence>
<evidence type="ECO:0000269" key="5">
    <source>
    </source>
</evidence>
<evidence type="ECO:0000269" key="6">
    <source>
    </source>
</evidence>
<evidence type="ECO:0000303" key="7">
    <source>
    </source>
</evidence>
<evidence type="ECO:0000305" key="8">
    <source>
    </source>
</evidence>